<organism>
    <name type="scientific">Anopheles gambiae</name>
    <name type="common">African malaria mosquito</name>
    <dbReference type="NCBI Taxonomy" id="7165"/>
    <lineage>
        <taxon>Eukaryota</taxon>
        <taxon>Metazoa</taxon>
        <taxon>Ecdysozoa</taxon>
        <taxon>Arthropoda</taxon>
        <taxon>Hexapoda</taxon>
        <taxon>Insecta</taxon>
        <taxon>Pterygota</taxon>
        <taxon>Neoptera</taxon>
        <taxon>Endopterygota</taxon>
        <taxon>Diptera</taxon>
        <taxon>Nematocera</taxon>
        <taxon>Culicoidea</taxon>
        <taxon>Culicidae</taxon>
        <taxon>Anophelinae</taxon>
        <taxon>Anopheles</taxon>
    </lineage>
</organism>
<geneLocation type="mitochondrion"/>
<comment type="function">
    <text evidence="1">Core subunit of the mitochondrial membrane respiratory chain NADH dehydrogenase (Complex I) that is believed to belong to the minimal assembly required for catalysis. Complex I functions in the transfer of electrons from NADH to the respiratory chain. The immediate electron acceptor for the enzyme is believed to be ubiquinone (By similarity).</text>
</comment>
<comment type="catalytic activity">
    <reaction>
        <text>a ubiquinone + NADH + 5 H(+)(in) = a ubiquinol + NAD(+) + 4 H(+)(out)</text>
        <dbReference type="Rhea" id="RHEA:29091"/>
        <dbReference type="Rhea" id="RHEA-COMP:9565"/>
        <dbReference type="Rhea" id="RHEA-COMP:9566"/>
        <dbReference type="ChEBI" id="CHEBI:15378"/>
        <dbReference type="ChEBI" id="CHEBI:16389"/>
        <dbReference type="ChEBI" id="CHEBI:17976"/>
        <dbReference type="ChEBI" id="CHEBI:57540"/>
        <dbReference type="ChEBI" id="CHEBI:57945"/>
        <dbReference type="EC" id="7.1.1.2"/>
    </reaction>
</comment>
<comment type="subcellular location">
    <subcellularLocation>
        <location evidence="3">Mitochondrion membrane</location>
        <topology evidence="3">Multi-pass membrane protein</topology>
    </subcellularLocation>
</comment>
<comment type="similarity">
    <text evidence="3">Belongs to the complex I subunit 6 family.</text>
</comment>
<keyword id="KW-0249">Electron transport</keyword>
<keyword id="KW-0472">Membrane</keyword>
<keyword id="KW-0496">Mitochondrion</keyword>
<keyword id="KW-0520">NAD</keyword>
<keyword id="KW-1185">Reference proteome</keyword>
<keyword id="KW-0679">Respiratory chain</keyword>
<keyword id="KW-1278">Translocase</keyword>
<keyword id="KW-0812">Transmembrane</keyword>
<keyword id="KW-1133">Transmembrane helix</keyword>
<keyword id="KW-0813">Transport</keyword>
<keyword id="KW-0830">Ubiquinone</keyword>
<feature type="chain" id="PRO_0000118239" description="NADH-ubiquinone oxidoreductase chain 6">
    <location>
        <begin position="1"/>
        <end position="174"/>
    </location>
</feature>
<feature type="transmembrane region" description="Helical" evidence="2">
    <location>
        <begin position="25"/>
        <end position="45"/>
    </location>
</feature>
<feature type="transmembrane region" description="Helical" evidence="2">
    <location>
        <begin position="48"/>
        <end position="68"/>
    </location>
</feature>
<feature type="transmembrane region" description="Helical" evidence="2">
    <location>
        <begin position="82"/>
        <end position="102"/>
    </location>
</feature>
<feature type="transmembrane region" description="Helical" evidence="2">
    <location>
        <begin position="143"/>
        <end position="163"/>
    </location>
</feature>
<reference key="1">
    <citation type="journal article" date="1993" name="Insect Mol. Biol.">
        <title>The mitochondrial genome of the mosquito Anopheles gambiae: DNA sequence, genome organization, and comparisons with mitochondrial sequences of other insects.</title>
        <authorList>
            <person name="Beard C.B."/>
            <person name="Hamm D.M."/>
            <person name="Collins F.H."/>
        </authorList>
    </citation>
    <scope>NUCLEOTIDE SEQUENCE [LARGE SCALE GENOMIC DNA]</scope>
    <source>
        <strain>G3</strain>
    </source>
</reference>
<gene>
    <name type="primary">mt:ND6</name>
    <name type="synonym">ND6</name>
</gene>
<proteinExistence type="inferred from homology"/>
<sequence length="174" mass="20453">MTKLIIMMMCLIMSFIFMQMKHPLSMGLMLLIQTFLTCLITGIYVKSFWFSYVLFLIFLGGMLILFIYVTSLSSNEMFTMSFKLTMFSLVLFSLSMVIFFILDKTLIEQFIINMEMEKFSMTNNLINENILSLNKMYNFPTNLITLLLINYLFLTLLVTVKITKKFYGPLRPMN</sequence>
<evidence type="ECO:0000250" key="1"/>
<evidence type="ECO:0000255" key="2"/>
<evidence type="ECO:0000305" key="3"/>
<name>NU6M_ANOGA</name>
<protein>
    <recommendedName>
        <fullName>NADH-ubiquinone oxidoreductase chain 6</fullName>
        <ecNumber>7.1.1.2</ecNumber>
    </recommendedName>
    <alternativeName>
        <fullName>NADH dehydrogenase subunit 6</fullName>
    </alternativeName>
</protein>
<dbReference type="EC" id="7.1.1.2"/>
<dbReference type="EMBL" id="L20934">
    <property type="protein sequence ID" value="AAD12200.1"/>
    <property type="molecule type" value="Genomic_DNA"/>
</dbReference>
<dbReference type="PIR" id="T09811">
    <property type="entry name" value="T09811"/>
</dbReference>
<dbReference type="RefSeq" id="NP_008079.1">
    <property type="nucleotide sequence ID" value="NC_002084.1"/>
</dbReference>
<dbReference type="SMR" id="P34856"/>
<dbReference type="FunCoup" id="P34856">
    <property type="interactions" value="130"/>
</dbReference>
<dbReference type="STRING" id="7165.P34856"/>
<dbReference type="PaxDb" id="7165-AGAP028386-PA"/>
<dbReference type="VEuPathDB" id="VectorBase:AGAMI1_008435"/>
<dbReference type="VEuPathDB" id="VectorBase:AGAP028386"/>
<dbReference type="eggNOG" id="ENOG502TCTS">
    <property type="taxonomic scope" value="Eukaryota"/>
</dbReference>
<dbReference type="HOGENOM" id="CLU_1548873_0_0_1"/>
<dbReference type="InParanoid" id="P34856"/>
<dbReference type="OMA" id="WFSYVLF"/>
<dbReference type="Proteomes" id="UP000007062">
    <property type="component" value="Mitochondrion"/>
</dbReference>
<dbReference type="GO" id="GO:0031966">
    <property type="term" value="C:mitochondrial membrane"/>
    <property type="evidence" value="ECO:0007669"/>
    <property type="project" value="UniProtKB-SubCell"/>
</dbReference>
<dbReference type="GO" id="GO:0005739">
    <property type="term" value="C:mitochondrion"/>
    <property type="evidence" value="ECO:0000318"/>
    <property type="project" value="GO_Central"/>
</dbReference>
<dbReference type="GO" id="GO:0008137">
    <property type="term" value="F:NADH dehydrogenase (ubiquinone) activity"/>
    <property type="evidence" value="ECO:0007669"/>
    <property type="project" value="UniProtKB-EC"/>
</dbReference>
<dbReference type="InterPro" id="IPR050269">
    <property type="entry name" value="ComplexI_Subunit6"/>
</dbReference>
<dbReference type="PANTHER" id="PTHR11435">
    <property type="entry name" value="NADH UBIQUINONE OXIDOREDUCTASE SUBUNIT ND6"/>
    <property type="match status" value="1"/>
</dbReference>
<dbReference type="PANTHER" id="PTHR11435:SF1">
    <property type="entry name" value="NADH-UBIQUINONE OXIDOREDUCTASE CHAIN 6"/>
    <property type="match status" value="1"/>
</dbReference>
<accession>P34856</accession>